<evidence type="ECO:0000255" key="1">
    <source>
        <dbReference type="HAMAP-Rule" id="MF_01384"/>
    </source>
</evidence>
<organism>
    <name type="scientific">Klebsiella pneumoniae</name>
    <dbReference type="NCBI Taxonomy" id="573"/>
    <lineage>
        <taxon>Bacteria</taxon>
        <taxon>Pseudomonadati</taxon>
        <taxon>Pseudomonadota</taxon>
        <taxon>Gammaproteobacteria</taxon>
        <taxon>Enterobacterales</taxon>
        <taxon>Enterobacteriaceae</taxon>
        <taxon>Klebsiella/Raoultella group</taxon>
        <taxon>Klebsiella</taxon>
        <taxon>Klebsiella pneumoniae complex</taxon>
    </lineage>
</organism>
<comment type="function">
    <text evidence="1">Required for maturation of urease via the functional incorporation of the urease nickel metallocenter.</text>
</comment>
<comment type="subunit">
    <text evidence="1">UreD, UreF and UreG form a complex that acts as a GTP-hydrolysis-dependent molecular chaperone, activating the urease apoprotein by helping to assemble the nickel containing metallocenter of UreC. The UreE protein probably delivers the nickel.</text>
</comment>
<comment type="subcellular location">
    <subcellularLocation>
        <location evidence="1">Cytoplasm</location>
    </subcellularLocation>
</comment>
<comment type="similarity">
    <text evidence="1">Belongs to the UreD family.</text>
</comment>
<dbReference type="EMBL" id="L07039">
    <property type="protein sequence ID" value="AAA25146.1"/>
    <property type="molecule type" value="Genomic_DNA"/>
</dbReference>
<dbReference type="PIR" id="S32937">
    <property type="entry name" value="S32937"/>
</dbReference>
<dbReference type="SMR" id="Q02944"/>
<dbReference type="GO" id="GO:0005737">
    <property type="term" value="C:cytoplasm"/>
    <property type="evidence" value="ECO:0007669"/>
    <property type="project" value="UniProtKB-SubCell"/>
</dbReference>
<dbReference type="GO" id="GO:0016151">
    <property type="term" value="F:nickel cation binding"/>
    <property type="evidence" value="ECO:0007669"/>
    <property type="project" value="UniProtKB-UniRule"/>
</dbReference>
<dbReference type="HAMAP" id="MF_01384">
    <property type="entry name" value="UreD"/>
    <property type="match status" value="1"/>
</dbReference>
<dbReference type="InterPro" id="IPR002669">
    <property type="entry name" value="UreD"/>
</dbReference>
<dbReference type="PANTHER" id="PTHR33643">
    <property type="entry name" value="UREASE ACCESSORY PROTEIN D"/>
    <property type="match status" value="1"/>
</dbReference>
<dbReference type="PANTHER" id="PTHR33643:SF1">
    <property type="entry name" value="UREASE ACCESSORY PROTEIN D"/>
    <property type="match status" value="1"/>
</dbReference>
<dbReference type="Pfam" id="PF01774">
    <property type="entry name" value="UreD"/>
    <property type="match status" value="1"/>
</dbReference>
<name>URED_KLEPN</name>
<keyword id="KW-0143">Chaperone</keyword>
<keyword id="KW-0963">Cytoplasm</keyword>
<keyword id="KW-0996">Nickel insertion</keyword>
<sequence length="270" mass="29954">MLPPLKKGWQRTLDLRFQQAGGKTVLASAQHVGPLTVQRPFYPEEETCHLYLLHPPGGIVGGDELTISAHLAPGCHTLITMPGASKFYRSSGAQALVRQQLTLAPQATLEWLPQDAIFFPGANARLFTTFHLCAFSRLLAWDLLCLGRPVIGETFSHGTLSNRLEVWVDDEPLLVERLQLQEGELSSVAERPWVGTLLCYPATDALLDGVRDALAPLGLYAGASLTDRLLTVRFLSDDNLICQRVMRDVWQFLRPHLTGKSPVLPRIWLT</sequence>
<reference key="1">
    <citation type="journal article" date="1993" name="Mol. Microbiol.">
        <title>Identification of a nitrogen-regulated promoter controlling expression of Klebsiella pneumoniae urease genes.</title>
        <authorList>
            <person name="Collins C.M."/>
            <person name="Gutman D.M."/>
            <person name="Laman H."/>
        </authorList>
    </citation>
    <scope>NUCLEOTIDE SEQUENCE [GENOMIC DNA]</scope>
    <source>
        <strain>IA551</strain>
    </source>
</reference>
<feature type="chain" id="PRO_0000067612" description="Urease accessory protein UreD">
    <location>
        <begin position="1"/>
        <end position="270"/>
    </location>
</feature>
<gene>
    <name evidence="1" type="primary">ureD</name>
</gene>
<protein>
    <recommendedName>
        <fullName evidence="1">Urease accessory protein UreD</fullName>
    </recommendedName>
</protein>
<accession>Q02944</accession>
<proteinExistence type="inferred from homology"/>